<feature type="chain" id="PRO_1000021612" description="Nicotinate-nucleotide--dimethylbenzimidazole phosphoribosyltransferase">
    <location>
        <begin position="1"/>
        <end position="351"/>
    </location>
</feature>
<feature type="active site" description="Proton acceptor" evidence="1">
    <location>
        <position position="317"/>
    </location>
</feature>
<keyword id="KW-0169">Cobalamin biosynthesis</keyword>
<keyword id="KW-0328">Glycosyltransferase</keyword>
<keyword id="KW-0808">Transferase</keyword>
<comment type="function">
    <text evidence="1">Catalyzes the synthesis of alpha-ribazole-5'-phosphate from nicotinate mononucleotide (NAMN) and 5,6-dimethylbenzimidazole (DMB).</text>
</comment>
<comment type="catalytic activity">
    <reaction evidence="1">
        <text>5,6-dimethylbenzimidazole + nicotinate beta-D-ribonucleotide = alpha-ribazole 5'-phosphate + nicotinate + H(+)</text>
        <dbReference type="Rhea" id="RHEA:11196"/>
        <dbReference type="ChEBI" id="CHEBI:15378"/>
        <dbReference type="ChEBI" id="CHEBI:15890"/>
        <dbReference type="ChEBI" id="CHEBI:32544"/>
        <dbReference type="ChEBI" id="CHEBI:57502"/>
        <dbReference type="ChEBI" id="CHEBI:57918"/>
        <dbReference type="EC" id="2.4.2.21"/>
    </reaction>
</comment>
<comment type="pathway">
    <text evidence="1">Nucleoside biosynthesis; alpha-ribazole biosynthesis; alpha-ribazole from 5,6-dimethylbenzimidazole: step 1/2.</text>
</comment>
<comment type="similarity">
    <text evidence="1">Belongs to the CobT family.</text>
</comment>
<gene>
    <name evidence="1" type="primary">cobT</name>
    <name type="ordered locus">PA14_47670</name>
</gene>
<dbReference type="EC" id="2.4.2.21" evidence="1"/>
<dbReference type="EMBL" id="CP000438">
    <property type="protein sequence ID" value="ABJ10467.1"/>
    <property type="molecule type" value="Genomic_DNA"/>
</dbReference>
<dbReference type="RefSeq" id="WP_003082601.1">
    <property type="nucleotide sequence ID" value="NZ_CP034244.1"/>
</dbReference>
<dbReference type="SMR" id="Q02JC0"/>
<dbReference type="KEGG" id="pau:PA14_47670"/>
<dbReference type="PseudoCAP" id="PA14_47670"/>
<dbReference type="HOGENOM" id="CLU_002982_0_1_6"/>
<dbReference type="BioCyc" id="PAER208963:G1G74-4005-MONOMER"/>
<dbReference type="UniPathway" id="UPA00061">
    <property type="reaction ID" value="UER00516"/>
</dbReference>
<dbReference type="Proteomes" id="UP000000653">
    <property type="component" value="Chromosome"/>
</dbReference>
<dbReference type="GO" id="GO:0008939">
    <property type="term" value="F:nicotinate-nucleotide-dimethylbenzimidazole phosphoribosyltransferase activity"/>
    <property type="evidence" value="ECO:0007669"/>
    <property type="project" value="UniProtKB-UniRule"/>
</dbReference>
<dbReference type="GO" id="GO:0009236">
    <property type="term" value="P:cobalamin biosynthetic process"/>
    <property type="evidence" value="ECO:0007669"/>
    <property type="project" value="UniProtKB-KW"/>
</dbReference>
<dbReference type="CDD" id="cd02439">
    <property type="entry name" value="DMB-PRT_CobT"/>
    <property type="match status" value="1"/>
</dbReference>
<dbReference type="FunFam" id="3.40.50.10210:FF:000001">
    <property type="entry name" value="Nicotinate-nucleotide--dimethylbenzimidazole phosphoribosyltransferase"/>
    <property type="match status" value="1"/>
</dbReference>
<dbReference type="Gene3D" id="1.10.1610.10">
    <property type="match status" value="1"/>
</dbReference>
<dbReference type="Gene3D" id="3.40.50.10210">
    <property type="match status" value="1"/>
</dbReference>
<dbReference type="HAMAP" id="MF_00230">
    <property type="entry name" value="CobT"/>
    <property type="match status" value="1"/>
</dbReference>
<dbReference type="InterPro" id="IPR003200">
    <property type="entry name" value="Nict_dMeBzImd_PRibTrfase"/>
</dbReference>
<dbReference type="InterPro" id="IPR017846">
    <property type="entry name" value="Nict_dMeBzImd_PRibTrfase_bact"/>
</dbReference>
<dbReference type="InterPro" id="IPR023195">
    <property type="entry name" value="Nict_dMeBzImd_PRibTrfase_N"/>
</dbReference>
<dbReference type="InterPro" id="IPR036087">
    <property type="entry name" value="Nict_dMeBzImd_PRibTrfase_sf"/>
</dbReference>
<dbReference type="NCBIfam" id="TIGR03160">
    <property type="entry name" value="cobT_DBIPRT"/>
    <property type="match status" value="1"/>
</dbReference>
<dbReference type="NCBIfam" id="NF000996">
    <property type="entry name" value="PRK00105.1"/>
    <property type="match status" value="1"/>
</dbReference>
<dbReference type="PANTHER" id="PTHR43463">
    <property type="entry name" value="NICOTINATE-NUCLEOTIDE--DIMETHYLBENZIMIDAZOLE PHOSPHORIBOSYLTRANSFERASE"/>
    <property type="match status" value="1"/>
</dbReference>
<dbReference type="PANTHER" id="PTHR43463:SF1">
    <property type="entry name" value="NICOTINATE-NUCLEOTIDE--DIMETHYLBENZIMIDAZOLE PHOSPHORIBOSYLTRANSFERASE"/>
    <property type="match status" value="1"/>
</dbReference>
<dbReference type="Pfam" id="PF02277">
    <property type="entry name" value="DBI_PRT"/>
    <property type="match status" value="1"/>
</dbReference>
<dbReference type="SUPFAM" id="SSF52733">
    <property type="entry name" value="Nicotinate mononucleotide:5,6-dimethylbenzimidazole phosphoribosyltransferase (CobT)"/>
    <property type="match status" value="1"/>
</dbReference>
<proteinExistence type="inferred from homology"/>
<organism>
    <name type="scientific">Pseudomonas aeruginosa (strain UCBPP-PA14)</name>
    <dbReference type="NCBI Taxonomy" id="208963"/>
    <lineage>
        <taxon>Bacteria</taxon>
        <taxon>Pseudomonadati</taxon>
        <taxon>Pseudomonadota</taxon>
        <taxon>Gammaproteobacteria</taxon>
        <taxon>Pseudomonadales</taxon>
        <taxon>Pseudomonadaceae</taxon>
        <taxon>Pseudomonas</taxon>
    </lineage>
</organism>
<name>COBT_PSEAB</name>
<sequence length="351" mass="36526">MSLQWWRDTCREADPQMRRRAAERQDRLTKPRGSLGRLEQVAIDLAALQGRERPSLERLWVTVFAGDHGVVAEGVSAYPQAVTGEMLRNFVRGGAAISVLARELGAGLEVVDLGTAVPLEALPGVRHLRLAAGTANFVEAPAMGAEQCLLALEAGRESVRRAEQAGSQLFIGGEMGIGNTTAAAAMACALLDAPVSALVGPGTGLDASGVAHKTAVIERALALHGAHRADPFETLRRLGGLEIAALAGAYLACAQKGMVALVDGYICSVAALCAVRLNPACRDWLLFAHSGAEPGHRHVLEALAAQPLLDLGLRLGEGSGAALAVPLLRQACALHAGMATFAEAAVSDRPA</sequence>
<reference key="1">
    <citation type="journal article" date="2006" name="Genome Biol.">
        <title>Genomic analysis reveals that Pseudomonas aeruginosa virulence is combinatorial.</title>
        <authorList>
            <person name="Lee D.G."/>
            <person name="Urbach J.M."/>
            <person name="Wu G."/>
            <person name="Liberati N.T."/>
            <person name="Feinbaum R.L."/>
            <person name="Miyata S."/>
            <person name="Diggins L.T."/>
            <person name="He J."/>
            <person name="Saucier M."/>
            <person name="Deziel E."/>
            <person name="Friedman L."/>
            <person name="Li L."/>
            <person name="Grills G."/>
            <person name="Montgomery K."/>
            <person name="Kucherlapati R."/>
            <person name="Rahme L.G."/>
            <person name="Ausubel F.M."/>
        </authorList>
    </citation>
    <scope>NUCLEOTIDE SEQUENCE [LARGE SCALE GENOMIC DNA]</scope>
    <source>
        <strain>UCBPP-PA14</strain>
    </source>
</reference>
<accession>Q02JC0</accession>
<evidence type="ECO:0000255" key="1">
    <source>
        <dbReference type="HAMAP-Rule" id="MF_00230"/>
    </source>
</evidence>
<protein>
    <recommendedName>
        <fullName evidence="1">Nicotinate-nucleotide--dimethylbenzimidazole phosphoribosyltransferase</fullName>
        <shortName evidence="1">NN:DBI PRT</shortName>
        <ecNumber evidence="1">2.4.2.21</ecNumber>
    </recommendedName>
    <alternativeName>
        <fullName evidence="1">N(1)-alpha-phosphoribosyltransferase</fullName>
    </alternativeName>
</protein>